<name>TRMA_VIBA3</name>
<dbReference type="EC" id="2.1.1.-" evidence="1"/>
<dbReference type="EC" id="2.1.1.35" evidence="1"/>
<dbReference type="EMBL" id="FM954972">
    <property type="protein sequence ID" value="CAV20278.1"/>
    <property type="molecule type" value="Genomic_DNA"/>
</dbReference>
<dbReference type="SMR" id="B7VM88"/>
<dbReference type="STRING" id="575788.VS_3000"/>
<dbReference type="KEGG" id="vsp:VS_3000"/>
<dbReference type="eggNOG" id="COG2265">
    <property type="taxonomic scope" value="Bacteria"/>
</dbReference>
<dbReference type="HOGENOM" id="CLU_043022_0_0_6"/>
<dbReference type="Proteomes" id="UP000009100">
    <property type="component" value="Chromosome 1"/>
</dbReference>
<dbReference type="GO" id="GO:0005829">
    <property type="term" value="C:cytosol"/>
    <property type="evidence" value="ECO:0007669"/>
    <property type="project" value="TreeGrafter"/>
</dbReference>
<dbReference type="GO" id="GO:0019843">
    <property type="term" value="F:rRNA binding"/>
    <property type="evidence" value="ECO:0007669"/>
    <property type="project" value="TreeGrafter"/>
</dbReference>
<dbReference type="GO" id="GO:0030697">
    <property type="term" value="F:tRNA (uracil(54)-C5)-methyltransferase activity, S-adenosyl methionine-dependent"/>
    <property type="evidence" value="ECO:0007669"/>
    <property type="project" value="UniProtKB-UniRule"/>
</dbReference>
<dbReference type="GO" id="GO:0000049">
    <property type="term" value="F:tRNA binding"/>
    <property type="evidence" value="ECO:0007669"/>
    <property type="project" value="TreeGrafter"/>
</dbReference>
<dbReference type="GO" id="GO:0030488">
    <property type="term" value="P:tRNA methylation"/>
    <property type="evidence" value="ECO:0007669"/>
    <property type="project" value="UniProtKB-UniRule"/>
</dbReference>
<dbReference type="CDD" id="cd02440">
    <property type="entry name" value="AdoMet_MTases"/>
    <property type="match status" value="1"/>
</dbReference>
<dbReference type="FunFam" id="2.40.50.1070:FF:000001">
    <property type="entry name" value="tRNA/tmRNA (uracil-C(5))-methyltransferase"/>
    <property type="match status" value="1"/>
</dbReference>
<dbReference type="FunFam" id="3.40.50.150:FF:000012">
    <property type="entry name" value="tRNA/tmRNA (uracil-C(5))-methyltransferase"/>
    <property type="match status" value="1"/>
</dbReference>
<dbReference type="Gene3D" id="2.40.50.1070">
    <property type="match status" value="1"/>
</dbReference>
<dbReference type="Gene3D" id="3.40.50.150">
    <property type="entry name" value="Vaccinia Virus protein VP39"/>
    <property type="match status" value="1"/>
</dbReference>
<dbReference type="HAMAP" id="MF_01011">
    <property type="entry name" value="RNA_methyltr_TrmA"/>
    <property type="match status" value="1"/>
</dbReference>
<dbReference type="InterPro" id="IPR030390">
    <property type="entry name" value="MeTrfase_TrmA_AS"/>
</dbReference>
<dbReference type="InterPro" id="IPR030391">
    <property type="entry name" value="MeTrfase_TrmA_CS"/>
</dbReference>
<dbReference type="InterPro" id="IPR029063">
    <property type="entry name" value="SAM-dependent_MTases_sf"/>
</dbReference>
<dbReference type="InterPro" id="IPR011869">
    <property type="entry name" value="TrmA_MeTrfase"/>
</dbReference>
<dbReference type="InterPro" id="IPR010280">
    <property type="entry name" value="U5_MeTrfase_fam"/>
</dbReference>
<dbReference type="NCBIfam" id="TIGR02143">
    <property type="entry name" value="trmA_only"/>
    <property type="match status" value="1"/>
</dbReference>
<dbReference type="PANTHER" id="PTHR47790">
    <property type="entry name" value="TRNA/TMRNA (URACIL-C(5))-METHYLTRANSFERASE"/>
    <property type="match status" value="1"/>
</dbReference>
<dbReference type="PANTHER" id="PTHR47790:SF2">
    <property type="entry name" value="TRNA_TMRNA (URACIL-C(5))-METHYLTRANSFERASE"/>
    <property type="match status" value="1"/>
</dbReference>
<dbReference type="Pfam" id="PF05958">
    <property type="entry name" value="tRNA_U5-meth_tr"/>
    <property type="match status" value="1"/>
</dbReference>
<dbReference type="SUPFAM" id="SSF53335">
    <property type="entry name" value="S-adenosyl-L-methionine-dependent methyltransferases"/>
    <property type="match status" value="1"/>
</dbReference>
<dbReference type="PROSITE" id="PS51687">
    <property type="entry name" value="SAM_MT_RNA_M5U"/>
    <property type="match status" value="1"/>
</dbReference>
<dbReference type="PROSITE" id="PS01230">
    <property type="entry name" value="TRMA_1"/>
    <property type="match status" value="1"/>
</dbReference>
<dbReference type="PROSITE" id="PS01231">
    <property type="entry name" value="TRMA_2"/>
    <property type="match status" value="1"/>
</dbReference>
<organism>
    <name type="scientific">Vibrio atlanticus (strain LGP32)</name>
    <name type="common">Vibrio splendidus (strain Mel32)</name>
    <dbReference type="NCBI Taxonomy" id="575788"/>
    <lineage>
        <taxon>Bacteria</taxon>
        <taxon>Pseudomonadati</taxon>
        <taxon>Pseudomonadota</taxon>
        <taxon>Gammaproteobacteria</taxon>
        <taxon>Vibrionales</taxon>
        <taxon>Vibrionaceae</taxon>
        <taxon>Vibrio</taxon>
    </lineage>
</organism>
<comment type="function">
    <text evidence="1">Dual-specificity methyltransferase that catalyzes the formation of 5-methyluridine at position 54 (m5U54) in all tRNAs, and that of position 341 (m5U341) in tmRNA (transfer-mRNA).</text>
</comment>
<comment type="catalytic activity">
    <reaction evidence="1">
        <text>uridine(54) in tRNA + S-adenosyl-L-methionine = 5-methyluridine(54) in tRNA + S-adenosyl-L-homocysteine + H(+)</text>
        <dbReference type="Rhea" id="RHEA:42712"/>
        <dbReference type="Rhea" id="RHEA-COMP:10167"/>
        <dbReference type="Rhea" id="RHEA-COMP:10193"/>
        <dbReference type="ChEBI" id="CHEBI:15378"/>
        <dbReference type="ChEBI" id="CHEBI:57856"/>
        <dbReference type="ChEBI" id="CHEBI:59789"/>
        <dbReference type="ChEBI" id="CHEBI:65315"/>
        <dbReference type="ChEBI" id="CHEBI:74447"/>
        <dbReference type="EC" id="2.1.1.35"/>
    </reaction>
</comment>
<comment type="catalytic activity">
    <reaction evidence="1">
        <text>uridine(341) in tmRNA + S-adenosyl-L-methionine = 5-methyluridine(341) in tmRNA + S-adenosyl-L-homocysteine + H(+)</text>
        <dbReference type="Rhea" id="RHEA:43612"/>
        <dbReference type="Rhea" id="RHEA-COMP:10630"/>
        <dbReference type="Rhea" id="RHEA-COMP:10631"/>
        <dbReference type="ChEBI" id="CHEBI:15378"/>
        <dbReference type="ChEBI" id="CHEBI:57856"/>
        <dbReference type="ChEBI" id="CHEBI:59789"/>
        <dbReference type="ChEBI" id="CHEBI:65315"/>
        <dbReference type="ChEBI" id="CHEBI:74447"/>
    </reaction>
</comment>
<comment type="similarity">
    <text evidence="1">Belongs to the class I-like SAM-binding methyltransferase superfamily. RNA M5U methyltransferase family. TrmA subfamily.</text>
</comment>
<accession>B7VM88</accession>
<evidence type="ECO:0000255" key="1">
    <source>
        <dbReference type="HAMAP-Rule" id="MF_01011"/>
    </source>
</evidence>
<protein>
    <recommendedName>
        <fullName evidence="1">tRNA/tmRNA (uracil-C(5))-methyltransferase</fullName>
        <ecNumber evidence="1">2.1.1.-</ecNumber>
        <ecNumber evidence="1">2.1.1.35</ecNumber>
    </recommendedName>
    <alternativeName>
        <fullName evidence="1">tRNA (uracil(54)-C(5))-methyltransferase</fullName>
    </alternativeName>
    <alternativeName>
        <fullName evidence="1">tRNA(m5U54)-methyltransferase</fullName>
        <shortName evidence="1">RUMT</shortName>
    </alternativeName>
    <alternativeName>
        <fullName evidence="1">tmRNA (uracil(341)-C(5))-methyltransferase</fullName>
    </alternativeName>
</protein>
<feature type="chain" id="PRO_1000148892" description="tRNA/tmRNA (uracil-C(5))-methyltransferase">
    <location>
        <begin position="1"/>
        <end position="369"/>
    </location>
</feature>
<feature type="active site" description="Nucleophile" evidence="1">
    <location>
        <position position="326"/>
    </location>
</feature>
<feature type="active site" description="Proton acceptor" evidence="1">
    <location>
        <position position="360"/>
    </location>
</feature>
<feature type="binding site" evidence="1">
    <location>
        <position position="190"/>
    </location>
    <ligand>
        <name>S-adenosyl-L-methionine</name>
        <dbReference type="ChEBI" id="CHEBI:59789"/>
    </ligand>
</feature>
<feature type="binding site" evidence="1">
    <location>
        <position position="218"/>
    </location>
    <ligand>
        <name>S-adenosyl-L-methionine</name>
        <dbReference type="ChEBI" id="CHEBI:59789"/>
    </ligand>
</feature>
<feature type="binding site" evidence="1">
    <location>
        <position position="223"/>
    </location>
    <ligand>
        <name>S-adenosyl-L-methionine</name>
        <dbReference type="ChEBI" id="CHEBI:59789"/>
    </ligand>
</feature>
<feature type="binding site" evidence="1">
    <location>
        <position position="239"/>
    </location>
    <ligand>
        <name>S-adenosyl-L-methionine</name>
        <dbReference type="ChEBI" id="CHEBI:59789"/>
    </ligand>
</feature>
<feature type="binding site" evidence="1">
    <location>
        <position position="301"/>
    </location>
    <ligand>
        <name>S-adenosyl-L-methionine</name>
        <dbReference type="ChEBI" id="CHEBI:59789"/>
    </ligand>
</feature>
<proteinExistence type="inferred from homology"/>
<gene>
    <name evidence="1" type="primary">trmA</name>
    <name type="ordered locus">VS_3000</name>
</gene>
<keyword id="KW-0489">Methyltransferase</keyword>
<keyword id="KW-0949">S-adenosyl-L-methionine</keyword>
<keyword id="KW-0808">Transferase</keyword>
<keyword id="KW-0819">tRNA processing</keyword>
<sequence>MANLEVNPQRYQEQLAEKTERLTEMFSEYNVPELEVYESPEQHYRMRAEFRVWHEGDDMYYVMFNQETKEKYRVDQFPAASRLINDLMPLLTDAMKDNHSLRHKLFQVDFLSTLSGEILVSLLYHRQLGEQWIQDAKALKQQLNDEGFNLNLIGRARKMKIVLDRDYVIEKLDVNGDSYIYQQVENSFTQPNGKVAEKMLEWAVDCTQDSKGDLLELYCGNGNFSLALAQNFERVLATELAKPSVESAQYNIAANKIENVQIIRMSAEDFTVAMEGKREFRRLQQANIDLKSYNCNTIFVDPPRSGMDVDTCKMVQGYERIMYISCNPETLKENLDILSETHDITRFALFDQFPYTHHMEAGVFLERKA</sequence>
<reference key="1">
    <citation type="submission" date="2009-02" db="EMBL/GenBank/DDBJ databases">
        <title>Vibrio splendidus str. LGP32 complete genome.</title>
        <authorList>
            <person name="Mazel D."/>
            <person name="Le Roux F."/>
        </authorList>
    </citation>
    <scope>NUCLEOTIDE SEQUENCE [LARGE SCALE GENOMIC DNA]</scope>
    <source>
        <strain>LGP32</strain>
    </source>
</reference>